<proteinExistence type="inferred from homology"/>
<comment type="function">
    <text evidence="1">Catalyzes the synthesis of the hydroxymethylpyrimidine phosphate (HMP-P) moiety of thiamine from aminoimidazole ribotide (AIR) in a radical S-adenosyl-L-methionine (SAM)-dependent reaction.</text>
</comment>
<comment type="catalytic activity">
    <reaction evidence="1">
        <text>5-amino-1-(5-phospho-beta-D-ribosyl)imidazole + S-adenosyl-L-methionine = 4-amino-2-methyl-5-(phosphooxymethyl)pyrimidine + CO + 5'-deoxyadenosine + formate + L-methionine + 3 H(+)</text>
        <dbReference type="Rhea" id="RHEA:24840"/>
        <dbReference type="ChEBI" id="CHEBI:15378"/>
        <dbReference type="ChEBI" id="CHEBI:15740"/>
        <dbReference type="ChEBI" id="CHEBI:17245"/>
        <dbReference type="ChEBI" id="CHEBI:17319"/>
        <dbReference type="ChEBI" id="CHEBI:57844"/>
        <dbReference type="ChEBI" id="CHEBI:58354"/>
        <dbReference type="ChEBI" id="CHEBI:59789"/>
        <dbReference type="ChEBI" id="CHEBI:137981"/>
        <dbReference type="EC" id="4.1.99.17"/>
    </reaction>
</comment>
<comment type="cofactor">
    <cofactor evidence="1">
        <name>[4Fe-4S] cluster</name>
        <dbReference type="ChEBI" id="CHEBI:49883"/>
    </cofactor>
    <text evidence="1">Binds 1 [4Fe-4S] cluster per subunit. The cluster is coordinated with 3 cysteines and an exchangeable S-adenosyl-L-methionine.</text>
</comment>
<comment type="pathway">
    <text evidence="1">Cofactor biosynthesis; thiamine diphosphate biosynthesis.</text>
</comment>
<comment type="subunit">
    <text evidence="1">Homodimer.</text>
</comment>
<comment type="similarity">
    <text evidence="1">Belongs to the ThiC family.</text>
</comment>
<accession>A5EPQ5</accession>
<feature type="chain" id="PRO_1000004736" description="Phosphomethylpyrimidine synthase">
    <location>
        <begin position="1"/>
        <end position="633"/>
    </location>
</feature>
<feature type="region of interest" description="Disordered" evidence="2">
    <location>
        <begin position="1"/>
        <end position="22"/>
    </location>
</feature>
<feature type="compositionally biased region" description="Polar residues" evidence="2">
    <location>
        <begin position="1"/>
        <end position="13"/>
    </location>
</feature>
<feature type="binding site" evidence="1">
    <location>
        <position position="221"/>
    </location>
    <ligand>
        <name>substrate</name>
    </ligand>
</feature>
<feature type="binding site" evidence="1">
    <location>
        <position position="250"/>
    </location>
    <ligand>
        <name>substrate</name>
    </ligand>
</feature>
<feature type="binding site" evidence="1">
    <location>
        <position position="279"/>
    </location>
    <ligand>
        <name>substrate</name>
    </ligand>
</feature>
<feature type="binding site" evidence="1">
    <location>
        <position position="315"/>
    </location>
    <ligand>
        <name>substrate</name>
    </ligand>
</feature>
<feature type="binding site" evidence="1">
    <location>
        <begin position="335"/>
        <end position="337"/>
    </location>
    <ligand>
        <name>substrate</name>
    </ligand>
</feature>
<feature type="binding site" evidence="1">
    <location>
        <begin position="376"/>
        <end position="379"/>
    </location>
    <ligand>
        <name>substrate</name>
    </ligand>
</feature>
<feature type="binding site" evidence="1">
    <location>
        <position position="415"/>
    </location>
    <ligand>
        <name>substrate</name>
    </ligand>
</feature>
<feature type="binding site" evidence="1">
    <location>
        <position position="419"/>
    </location>
    <ligand>
        <name>Zn(2+)</name>
        <dbReference type="ChEBI" id="CHEBI:29105"/>
    </ligand>
</feature>
<feature type="binding site" evidence="1">
    <location>
        <position position="442"/>
    </location>
    <ligand>
        <name>substrate</name>
    </ligand>
</feature>
<feature type="binding site" evidence="1">
    <location>
        <position position="483"/>
    </location>
    <ligand>
        <name>Zn(2+)</name>
        <dbReference type="ChEBI" id="CHEBI:29105"/>
    </ligand>
</feature>
<feature type="binding site" evidence="1">
    <location>
        <position position="563"/>
    </location>
    <ligand>
        <name>[4Fe-4S] cluster</name>
        <dbReference type="ChEBI" id="CHEBI:49883"/>
        <note>4Fe-4S-S-AdoMet</note>
    </ligand>
</feature>
<feature type="binding site" evidence="1">
    <location>
        <position position="566"/>
    </location>
    <ligand>
        <name>[4Fe-4S] cluster</name>
        <dbReference type="ChEBI" id="CHEBI:49883"/>
        <note>4Fe-4S-S-AdoMet</note>
    </ligand>
</feature>
<feature type="binding site" evidence="1">
    <location>
        <position position="571"/>
    </location>
    <ligand>
        <name>[4Fe-4S] cluster</name>
        <dbReference type="ChEBI" id="CHEBI:49883"/>
        <note>4Fe-4S-S-AdoMet</note>
    </ligand>
</feature>
<sequence>MNIRSNPDTTLPAVTTGPLPSSRKIYAAPDSAPDLRVPLREIILSEAAGEPNLPVYDTSGPYTDPSVTIDVNAGLPRNRTAWVLERGGVEEYEGRDIKPEDNGNVGADKAAKAFIAHHKPLRGLDGHKITQLEFARAGIITKEMIYVAERENLGRKQQLERAEAALADGESFGAEVPAFITPEFVRSEIARGRAIIPCNINHAELEPMIIGRNFLTKINANIGNSAVTSSVEEEVDKMVWAIRWGADTVMDLSTGRNIHTTREWILRNSPVPIGTVPIYQALEKCNGDPVKLTWELYKDTLIEQCEQGVDYFTIHAGVRLQYIHLTASRVTGIVSRGGSIMAKWCLAHHKESFLYTHFDEICDIMRKYDVSFSLGDGLRPGSIADANDRAQFAELETLGELTKIAWDKGCQVMIEGPGHVPMHKIKINMDKQLKECGEAPFYTLGPLTTDIAPGYDHITSGIGAAMIGWFGCAMLCYVTPKEHLGLPDRNDVKTGVITYKIAAHAADLAKGHPAAQLRDDALSRARFEFRWTDQFNLGLDPDTAKSFHDETLPKEAHKVAHFCSMCGPKFCSMKITQDVRDYAATLNDPTTVGVTISGTIEDGMAQMSAKFKEMGGSVYLDADKVKESNKALS</sequence>
<keyword id="KW-0004">4Fe-4S</keyword>
<keyword id="KW-0408">Iron</keyword>
<keyword id="KW-0411">Iron-sulfur</keyword>
<keyword id="KW-0456">Lyase</keyword>
<keyword id="KW-0479">Metal-binding</keyword>
<keyword id="KW-1185">Reference proteome</keyword>
<keyword id="KW-0949">S-adenosyl-L-methionine</keyword>
<keyword id="KW-0784">Thiamine biosynthesis</keyword>
<keyword id="KW-0862">Zinc</keyword>
<organism>
    <name type="scientific">Bradyrhizobium sp. (strain BTAi1 / ATCC BAA-1182)</name>
    <dbReference type="NCBI Taxonomy" id="288000"/>
    <lineage>
        <taxon>Bacteria</taxon>
        <taxon>Pseudomonadati</taxon>
        <taxon>Pseudomonadota</taxon>
        <taxon>Alphaproteobacteria</taxon>
        <taxon>Hyphomicrobiales</taxon>
        <taxon>Nitrobacteraceae</taxon>
        <taxon>Bradyrhizobium</taxon>
    </lineage>
</organism>
<name>THIC_BRASB</name>
<reference key="1">
    <citation type="journal article" date="2007" name="Science">
        <title>Legumes symbioses: absence of nod genes in photosynthetic bradyrhizobia.</title>
        <authorList>
            <person name="Giraud E."/>
            <person name="Moulin L."/>
            <person name="Vallenet D."/>
            <person name="Barbe V."/>
            <person name="Cytryn E."/>
            <person name="Avarre J.-C."/>
            <person name="Jaubert M."/>
            <person name="Simon D."/>
            <person name="Cartieaux F."/>
            <person name="Prin Y."/>
            <person name="Bena G."/>
            <person name="Hannibal L."/>
            <person name="Fardoux J."/>
            <person name="Kojadinovic M."/>
            <person name="Vuillet L."/>
            <person name="Lajus A."/>
            <person name="Cruveiller S."/>
            <person name="Rouy Z."/>
            <person name="Mangenot S."/>
            <person name="Segurens B."/>
            <person name="Dossat C."/>
            <person name="Franck W.L."/>
            <person name="Chang W.-S."/>
            <person name="Saunders E."/>
            <person name="Bruce D."/>
            <person name="Richardson P."/>
            <person name="Normand P."/>
            <person name="Dreyfus B."/>
            <person name="Pignol D."/>
            <person name="Stacey G."/>
            <person name="Emerich D."/>
            <person name="Vermeglio A."/>
            <person name="Medigue C."/>
            <person name="Sadowsky M."/>
        </authorList>
    </citation>
    <scope>NUCLEOTIDE SEQUENCE [LARGE SCALE GENOMIC DNA]</scope>
    <source>
        <strain>BTAi1 / ATCC BAA-1182</strain>
    </source>
</reference>
<evidence type="ECO:0000255" key="1">
    <source>
        <dbReference type="HAMAP-Rule" id="MF_00089"/>
    </source>
</evidence>
<evidence type="ECO:0000256" key="2">
    <source>
        <dbReference type="SAM" id="MobiDB-lite"/>
    </source>
</evidence>
<gene>
    <name evidence="1" type="primary">thiC</name>
    <name type="ordered locus">BBta_6226</name>
</gene>
<protein>
    <recommendedName>
        <fullName evidence="1">Phosphomethylpyrimidine synthase</fullName>
        <ecNumber evidence="1">4.1.99.17</ecNumber>
    </recommendedName>
    <alternativeName>
        <fullName evidence="1">Hydroxymethylpyrimidine phosphate synthase</fullName>
        <shortName evidence="1">HMP-P synthase</shortName>
        <shortName evidence="1">HMP-phosphate synthase</shortName>
        <shortName evidence="1">HMPP synthase</shortName>
    </alternativeName>
    <alternativeName>
        <fullName evidence="1">Thiamine biosynthesis protein ThiC</fullName>
    </alternativeName>
</protein>
<dbReference type="EC" id="4.1.99.17" evidence="1"/>
<dbReference type="EMBL" id="CP000494">
    <property type="protein sequence ID" value="ABQ38149.1"/>
    <property type="molecule type" value="Genomic_DNA"/>
</dbReference>
<dbReference type="RefSeq" id="WP_012046098.1">
    <property type="nucleotide sequence ID" value="NC_009485.1"/>
</dbReference>
<dbReference type="SMR" id="A5EPQ5"/>
<dbReference type="STRING" id="288000.BBta_6226"/>
<dbReference type="KEGG" id="bbt:BBta_6226"/>
<dbReference type="eggNOG" id="COG0422">
    <property type="taxonomic scope" value="Bacteria"/>
</dbReference>
<dbReference type="HOGENOM" id="CLU_013181_2_1_5"/>
<dbReference type="OrthoDB" id="9805897at2"/>
<dbReference type="UniPathway" id="UPA00060"/>
<dbReference type="Proteomes" id="UP000000246">
    <property type="component" value="Chromosome"/>
</dbReference>
<dbReference type="GO" id="GO:0005829">
    <property type="term" value="C:cytosol"/>
    <property type="evidence" value="ECO:0007669"/>
    <property type="project" value="TreeGrafter"/>
</dbReference>
<dbReference type="GO" id="GO:0051539">
    <property type="term" value="F:4 iron, 4 sulfur cluster binding"/>
    <property type="evidence" value="ECO:0007669"/>
    <property type="project" value="UniProtKB-KW"/>
</dbReference>
<dbReference type="GO" id="GO:0016830">
    <property type="term" value="F:carbon-carbon lyase activity"/>
    <property type="evidence" value="ECO:0007669"/>
    <property type="project" value="InterPro"/>
</dbReference>
<dbReference type="GO" id="GO:0008270">
    <property type="term" value="F:zinc ion binding"/>
    <property type="evidence" value="ECO:0007669"/>
    <property type="project" value="UniProtKB-UniRule"/>
</dbReference>
<dbReference type="GO" id="GO:0009228">
    <property type="term" value="P:thiamine biosynthetic process"/>
    <property type="evidence" value="ECO:0007669"/>
    <property type="project" value="UniProtKB-KW"/>
</dbReference>
<dbReference type="GO" id="GO:0009229">
    <property type="term" value="P:thiamine diphosphate biosynthetic process"/>
    <property type="evidence" value="ECO:0007669"/>
    <property type="project" value="UniProtKB-UniRule"/>
</dbReference>
<dbReference type="FunFam" id="3.20.20.540:FF:000001">
    <property type="entry name" value="Phosphomethylpyrimidine synthase"/>
    <property type="match status" value="1"/>
</dbReference>
<dbReference type="Gene3D" id="6.10.250.620">
    <property type="match status" value="1"/>
</dbReference>
<dbReference type="Gene3D" id="3.20.20.540">
    <property type="entry name" value="Radical SAM ThiC family, central domain"/>
    <property type="match status" value="1"/>
</dbReference>
<dbReference type="HAMAP" id="MF_00089">
    <property type="entry name" value="ThiC"/>
    <property type="match status" value="1"/>
</dbReference>
<dbReference type="InterPro" id="IPR037509">
    <property type="entry name" value="ThiC"/>
</dbReference>
<dbReference type="InterPro" id="IPR025747">
    <property type="entry name" value="ThiC-associated_dom"/>
</dbReference>
<dbReference type="InterPro" id="IPR038521">
    <property type="entry name" value="ThiC/Bza_core_dom"/>
</dbReference>
<dbReference type="InterPro" id="IPR002817">
    <property type="entry name" value="ThiC/BzaA/B"/>
</dbReference>
<dbReference type="NCBIfam" id="NF006763">
    <property type="entry name" value="PRK09284.1"/>
    <property type="match status" value="1"/>
</dbReference>
<dbReference type="NCBIfam" id="NF009895">
    <property type="entry name" value="PRK13352.1"/>
    <property type="match status" value="1"/>
</dbReference>
<dbReference type="NCBIfam" id="TIGR00190">
    <property type="entry name" value="thiC"/>
    <property type="match status" value="1"/>
</dbReference>
<dbReference type="PANTHER" id="PTHR30557:SF1">
    <property type="entry name" value="PHOSPHOMETHYLPYRIMIDINE SYNTHASE, CHLOROPLASTIC"/>
    <property type="match status" value="1"/>
</dbReference>
<dbReference type="PANTHER" id="PTHR30557">
    <property type="entry name" value="THIAMINE BIOSYNTHESIS PROTEIN THIC"/>
    <property type="match status" value="1"/>
</dbReference>
<dbReference type="Pfam" id="PF13667">
    <property type="entry name" value="ThiC-associated"/>
    <property type="match status" value="1"/>
</dbReference>
<dbReference type="Pfam" id="PF01964">
    <property type="entry name" value="ThiC_Rad_SAM"/>
    <property type="match status" value="1"/>
</dbReference>
<dbReference type="SFLD" id="SFLDF00407">
    <property type="entry name" value="phosphomethylpyrimidine_syntha"/>
    <property type="match status" value="1"/>
</dbReference>
<dbReference type="SFLD" id="SFLDG01114">
    <property type="entry name" value="phosphomethylpyrimidine_syntha"/>
    <property type="match status" value="1"/>
</dbReference>
<dbReference type="SFLD" id="SFLDS00113">
    <property type="entry name" value="Radical_SAM_Phosphomethylpyrim"/>
    <property type="match status" value="1"/>
</dbReference>